<comment type="function">
    <text evidence="1">Involved in the binding of tRNA to the ribosomes.</text>
</comment>
<comment type="subunit">
    <text evidence="1">Part of the 30S ribosomal subunit.</text>
</comment>
<comment type="similarity">
    <text evidence="1">Belongs to the universal ribosomal protein uS10 family.</text>
</comment>
<sequence>MQNQRIRIRLKAFDHRLIDQATAEIVETAKRTGAQVRGPIPLPTRKERFTVLISPHVNKDARDQYEIRTHLRLVDIVEPTEKTVDALMRLDLAAGVDVQISLG</sequence>
<evidence type="ECO:0000255" key="1">
    <source>
        <dbReference type="HAMAP-Rule" id="MF_00508"/>
    </source>
</evidence>
<evidence type="ECO:0000305" key="2"/>
<keyword id="KW-1185">Reference proteome</keyword>
<keyword id="KW-0687">Ribonucleoprotein</keyword>
<keyword id="KW-0689">Ribosomal protein</keyword>
<protein>
    <recommendedName>
        <fullName evidence="1">Small ribosomal subunit protein uS10</fullName>
    </recommendedName>
    <alternativeName>
        <fullName evidence="2">30S ribosomal protein S10</fullName>
    </alternativeName>
</protein>
<proteinExistence type="inferred from homology"/>
<gene>
    <name evidence="1" type="primary">rpsJ</name>
    <name type="ordered locus">SSON_3462</name>
</gene>
<feature type="chain" id="PRO_0000237095" description="Small ribosomal subunit protein uS10">
    <location>
        <begin position="1"/>
        <end position="103"/>
    </location>
</feature>
<name>RS10_SHISS</name>
<reference key="1">
    <citation type="journal article" date="2005" name="Nucleic Acids Res.">
        <title>Genome dynamics and diversity of Shigella species, the etiologic agents of bacillary dysentery.</title>
        <authorList>
            <person name="Yang F."/>
            <person name="Yang J."/>
            <person name="Zhang X."/>
            <person name="Chen L."/>
            <person name="Jiang Y."/>
            <person name="Yan Y."/>
            <person name="Tang X."/>
            <person name="Wang J."/>
            <person name="Xiong Z."/>
            <person name="Dong J."/>
            <person name="Xue Y."/>
            <person name="Zhu Y."/>
            <person name="Xu X."/>
            <person name="Sun L."/>
            <person name="Chen S."/>
            <person name="Nie H."/>
            <person name="Peng J."/>
            <person name="Xu J."/>
            <person name="Wang Y."/>
            <person name="Yuan Z."/>
            <person name="Wen Y."/>
            <person name="Yao Z."/>
            <person name="Shen Y."/>
            <person name="Qiang B."/>
            <person name="Hou Y."/>
            <person name="Yu J."/>
            <person name="Jin Q."/>
        </authorList>
    </citation>
    <scope>NUCLEOTIDE SEQUENCE [LARGE SCALE GENOMIC DNA]</scope>
    <source>
        <strain>Ss046</strain>
    </source>
</reference>
<organism>
    <name type="scientific">Shigella sonnei (strain Ss046)</name>
    <dbReference type="NCBI Taxonomy" id="300269"/>
    <lineage>
        <taxon>Bacteria</taxon>
        <taxon>Pseudomonadati</taxon>
        <taxon>Pseudomonadota</taxon>
        <taxon>Gammaproteobacteria</taxon>
        <taxon>Enterobacterales</taxon>
        <taxon>Enterobacteriaceae</taxon>
        <taxon>Shigella</taxon>
    </lineage>
</organism>
<dbReference type="EMBL" id="CP000038">
    <property type="protein sequence ID" value="AAZ90024.1"/>
    <property type="molecule type" value="Genomic_DNA"/>
</dbReference>
<dbReference type="RefSeq" id="WP_001181004.1">
    <property type="nucleotide sequence ID" value="NC_007384.1"/>
</dbReference>
<dbReference type="SMR" id="Q3YWT8"/>
<dbReference type="GeneID" id="93778666"/>
<dbReference type="KEGG" id="ssn:SSON_3462"/>
<dbReference type="HOGENOM" id="CLU_122625_1_3_6"/>
<dbReference type="Proteomes" id="UP000002529">
    <property type="component" value="Chromosome"/>
</dbReference>
<dbReference type="GO" id="GO:1990904">
    <property type="term" value="C:ribonucleoprotein complex"/>
    <property type="evidence" value="ECO:0007669"/>
    <property type="project" value="UniProtKB-KW"/>
</dbReference>
<dbReference type="GO" id="GO:0005840">
    <property type="term" value="C:ribosome"/>
    <property type="evidence" value="ECO:0007669"/>
    <property type="project" value="UniProtKB-KW"/>
</dbReference>
<dbReference type="GO" id="GO:0003735">
    <property type="term" value="F:structural constituent of ribosome"/>
    <property type="evidence" value="ECO:0007669"/>
    <property type="project" value="InterPro"/>
</dbReference>
<dbReference type="GO" id="GO:0000049">
    <property type="term" value="F:tRNA binding"/>
    <property type="evidence" value="ECO:0007669"/>
    <property type="project" value="UniProtKB-UniRule"/>
</dbReference>
<dbReference type="GO" id="GO:0006412">
    <property type="term" value="P:translation"/>
    <property type="evidence" value="ECO:0007669"/>
    <property type="project" value="UniProtKB-UniRule"/>
</dbReference>
<dbReference type="FunFam" id="3.30.70.600:FF:000001">
    <property type="entry name" value="30S ribosomal protein S10"/>
    <property type="match status" value="1"/>
</dbReference>
<dbReference type="Gene3D" id="3.30.70.600">
    <property type="entry name" value="Ribosomal protein S10 domain"/>
    <property type="match status" value="1"/>
</dbReference>
<dbReference type="HAMAP" id="MF_00508">
    <property type="entry name" value="Ribosomal_uS10"/>
    <property type="match status" value="1"/>
</dbReference>
<dbReference type="InterPro" id="IPR001848">
    <property type="entry name" value="Ribosomal_uS10"/>
</dbReference>
<dbReference type="InterPro" id="IPR018268">
    <property type="entry name" value="Ribosomal_uS10_CS"/>
</dbReference>
<dbReference type="InterPro" id="IPR027486">
    <property type="entry name" value="Ribosomal_uS10_dom"/>
</dbReference>
<dbReference type="InterPro" id="IPR036838">
    <property type="entry name" value="Ribosomal_uS10_dom_sf"/>
</dbReference>
<dbReference type="NCBIfam" id="NF001861">
    <property type="entry name" value="PRK00596.1"/>
    <property type="match status" value="1"/>
</dbReference>
<dbReference type="NCBIfam" id="TIGR01049">
    <property type="entry name" value="rpsJ_bact"/>
    <property type="match status" value="1"/>
</dbReference>
<dbReference type="PANTHER" id="PTHR11700">
    <property type="entry name" value="30S RIBOSOMAL PROTEIN S10 FAMILY MEMBER"/>
    <property type="match status" value="1"/>
</dbReference>
<dbReference type="Pfam" id="PF00338">
    <property type="entry name" value="Ribosomal_S10"/>
    <property type="match status" value="1"/>
</dbReference>
<dbReference type="PRINTS" id="PR00971">
    <property type="entry name" value="RIBOSOMALS10"/>
</dbReference>
<dbReference type="SMART" id="SM01403">
    <property type="entry name" value="Ribosomal_S10"/>
    <property type="match status" value="1"/>
</dbReference>
<dbReference type="SUPFAM" id="SSF54999">
    <property type="entry name" value="Ribosomal protein S10"/>
    <property type="match status" value="1"/>
</dbReference>
<dbReference type="PROSITE" id="PS00361">
    <property type="entry name" value="RIBOSOMAL_S10"/>
    <property type="match status" value="1"/>
</dbReference>
<accession>Q3YWT8</accession>